<protein>
    <recommendedName>
        <fullName>Zinc finger protein Gfi-1</fullName>
    </recommendedName>
    <alternativeName>
        <fullName>Growth factor independence 1</fullName>
    </alternativeName>
</protein>
<keyword id="KW-0238">DNA-binding</keyword>
<keyword id="KW-0479">Metal-binding</keyword>
<keyword id="KW-0539">Nucleus</keyword>
<keyword id="KW-0597">Phosphoprotein</keyword>
<keyword id="KW-1185">Reference proteome</keyword>
<keyword id="KW-0677">Repeat</keyword>
<keyword id="KW-0804">Transcription</keyword>
<keyword id="KW-0805">Transcription regulation</keyword>
<keyword id="KW-0832">Ubl conjugation</keyword>
<keyword id="KW-0862">Zinc</keyword>
<keyword id="KW-0863">Zinc-finger</keyword>
<evidence type="ECO:0000250" key="1"/>
<evidence type="ECO:0000250" key="2">
    <source>
        <dbReference type="UniProtKB" id="P70338"/>
    </source>
</evidence>
<evidence type="ECO:0000250" key="3">
    <source>
        <dbReference type="UniProtKB" id="Q07120"/>
    </source>
</evidence>
<evidence type="ECO:0000250" key="4">
    <source>
        <dbReference type="UniProtKB" id="Q99684"/>
    </source>
</evidence>
<evidence type="ECO:0000255" key="5">
    <source>
        <dbReference type="PROSITE-ProRule" id="PRU00042"/>
    </source>
</evidence>
<evidence type="ECO:0000256" key="6">
    <source>
        <dbReference type="SAM" id="MobiDB-lite"/>
    </source>
</evidence>
<sequence>MPRSFLVKSKKAHSYHQPRSPGPDYSLRLENVLAPGGADGTSSAGGAQTEPRGRLSPESQLTEAPDRSSASPGSCEGSVCDRSSEFEDFWRPPSPSVSPASEKSVCPSLDEAQPFPLPFKPYSWRGLAGSDLRHLVHSYRPCAALDRGAGLGLFCERAPEPGHPAALYGPERAAGGAGAGAPGGGSAGGGAAGGSGLGLYGDFGPAAAGLYERPTAAAGGLYSERGHGLHADKGAGVKVESELLCTRLLLGGGSYKCIKCSKVFSTPHGLEVHVRRSHSGTRPFACEMCGKTFGHAVSLEQHKAVHSQERSFDCKICGKSFKRSSTLSTHLLIHSDTRPYPCQYCGKRFHQKSDMKKHTFIHTGEKPHKCQVCGKAFSQSSNLITHSRKHTGFKPFGCDLCGKGFQRKVDLRRHRETQHGLK</sequence>
<organism>
    <name type="scientific">Canis lupus familiaris</name>
    <name type="common">Dog</name>
    <name type="synonym">Canis familiaris</name>
    <dbReference type="NCBI Taxonomy" id="9615"/>
    <lineage>
        <taxon>Eukaryota</taxon>
        <taxon>Metazoa</taxon>
        <taxon>Chordata</taxon>
        <taxon>Craniata</taxon>
        <taxon>Vertebrata</taxon>
        <taxon>Euteleostomi</taxon>
        <taxon>Mammalia</taxon>
        <taxon>Eutheria</taxon>
        <taxon>Laurasiatheria</taxon>
        <taxon>Carnivora</taxon>
        <taxon>Caniformia</taxon>
        <taxon>Canidae</taxon>
        <taxon>Canis</taxon>
    </lineage>
</organism>
<gene>
    <name type="primary">GFI1</name>
</gene>
<accession>Q5DWN0</accession>
<comment type="function">
    <text evidence="2 4">Transcription repressor essential for hematopoiesis. Functions in a cell-context and development-specific manner. Binds to 5'-TAAATCAC[AT]GCA-3' in the promoter region of a large number of genes. Component of several complexes, including the EHMT2-GFI1-HDAC1, AJUBA-GFI1-HDAC1 and RCOR-GFI-KDM1A-HDAC complexes, that suppress, via histone deacetylase (HDAC) recruitment, a number of genes implicated in multilineage blood cell development. Regulates neutrophil differentiation, promotes proliferation of lymphoid cells, and is required for granulocyte development (By similarity). Inhibits SPI1 transcriptional activity at macrophage-specific genes, repressing macrophage differentiation of myeloid progenitor cells and promoting granulocyte commitment. Mediates, together with U2AF1L4, the alternative splicing of CD45 and controls T-cell receptor signaling (By similarity). Regulates the endotoxin-mediated Toll-like receptor (TLR) inflammatory response by antagonizing RELA. Cooperates with CBFA2T2 to regulate ITGB1-dependent neurite growth. Controls cell-cycle progression by repressing CDKNIA/p21 transcription in response to TGFB1 via recruitment of GFI1 by ZBTB17 to the CDKNIA/p21 and CDKNIB promoters (By similarity). Required for the maintenance of inner ear hair cells (By similarity). In addition to its role in transcription, acts as a substrate adapter for PRMT1 in the DNA damage response: facilitates the recognition of TP53BP1 and MRE11 substrates by PRMT1, promoting their methylation and the DNA damage response (By similarity).</text>
</comment>
<comment type="subunit">
    <text evidence="1 2">Interacts with U2AF1L4. Component of RCOR-GFI-KDM1A-HDAC complexes. Interacts directly with RCOR1, KDM1A and HDAC2. Also interacts with HDAC1 and HDAC3. Interacts (via the zinc-finger domain) with ARIH2; the interaction prevents GFI1 ubiquitination and proteasomal degradation. Interacts with PIAS3; the interaction relieves the inhibitory effect of PIAS3 on STAT3-mediated transcriptional activity. Forms a complex with EHMT2 and HDAC1 to promote 'Lys-9' dimethylation of H3 (H3K9Me2) and repress expression of target genes. Interacts directly with EHMT2. Component of the GFI1-AJUBA-HDAC1 repressor complex. Interacts directly with AJUBA (via ITS LIM domains); the interaction results in the HDAC-dependent corepression of a subset of GFI1 target genes and, occurs independently of the SNAG domain. Interacts with SPI1; the interaction inhibits SPI1 transcriptional activity targeted at macrophage-specific genes, repressing macrophage differentiation of myeloid progenitor cells and promoting granulocyte commitment (By similarity). Interacts with RUNX1T1; the interaction represses HDAC-mediated transcriptional activity. Interacts with RELA; the interaction occurs on liposaccharide (LPS) stimulation and controls RELA DNA binding activity and regulates endotoxin-mediated TOLL-like receptor inflammatory response. Interacts (via the C-terminal zinc fingers) with ZBTB17; the interaction results in the recruitment of GFI1 to the CDKN1A/p21 and CDKNIB promoters and repression of transcription (By similarity).</text>
</comment>
<comment type="subcellular location">
    <subcellularLocation>
        <location evidence="1">Nucleus</location>
    </subcellularLocation>
    <text evidence="1">Colocalizes with PIAS3 and RUNX1T1 in nuclear dots.</text>
</comment>
<comment type="domain">
    <text evidence="1">Zinc fingers 3, 4 and 5 are required for DNA-binding and for interaction with SPI1.</text>
</comment>
<comment type="domain">
    <text evidence="1">The SNAG domain of GFIs is required for nuclear location and for interaction with some corepressors.</text>
</comment>
<comment type="PTM">
    <text evidence="1">Ubiquitinated.</text>
</comment>
<name>GFI1_CANLF</name>
<feature type="chain" id="PRO_0000047192" description="Zinc finger protein Gfi-1">
    <location>
        <begin position="1"/>
        <end position="422"/>
    </location>
</feature>
<feature type="zinc finger region" description="C2H2-type 1" evidence="5">
    <location>
        <begin position="255"/>
        <end position="278"/>
    </location>
</feature>
<feature type="zinc finger region" description="C2H2-type 2" evidence="5">
    <location>
        <begin position="284"/>
        <end position="306"/>
    </location>
</feature>
<feature type="zinc finger region" description="C2H2-type 3" evidence="5">
    <location>
        <begin position="312"/>
        <end position="334"/>
    </location>
</feature>
<feature type="zinc finger region" description="C2H2-type 4" evidence="5">
    <location>
        <begin position="340"/>
        <end position="362"/>
    </location>
</feature>
<feature type="zinc finger region" description="C2H2-type 5" evidence="5">
    <location>
        <begin position="368"/>
        <end position="390"/>
    </location>
</feature>
<feature type="zinc finger region" description="C2H2-type 6" evidence="5">
    <location>
        <begin position="396"/>
        <end position="419"/>
    </location>
</feature>
<feature type="region of interest" description="Disordered" evidence="6">
    <location>
        <begin position="1"/>
        <end position="107"/>
    </location>
</feature>
<feature type="region of interest" description="SNAG domain" evidence="1">
    <location>
        <begin position="1"/>
        <end position="20"/>
    </location>
</feature>
<feature type="region of interest" description="Required for interaction with RELA" evidence="1">
    <location>
        <begin position="140"/>
        <end position="257"/>
    </location>
</feature>
<feature type="compositionally biased region" description="Low complexity" evidence="6">
    <location>
        <begin position="34"/>
        <end position="47"/>
    </location>
</feature>
<feature type="compositionally biased region" description="Polar residues" evidence="6">
    <location>
        <begin position="57"/>
        <end position="72"/>
    </location>
</feature>
<feature type="modified residue" description="Phosphoserine" evidence="3">
    <location>
        <position position="20"/>
    </location>
</feature>
<feature type="modified residue" description="Phosphoserine" evidence="3">
    <location>
        <position position="56"/>
    </location>
</feature>
<reference key="1">
    <citation type="submission" date="2004-05" db="EMBL/GenBank/DDBJ databases">
        <title>Molecular cloning of proto-oncogene Gfi-1 in dog and its expression.</title>
        <authorList>
            <person name="Okayama T."/>
            <person name="Masuda K."/>
            <person name="Ohno K."/>
            <person name="Tsujimoto H."/>
        </authorList>
    </citation>
    <scope>NUCLEOTIDE SEQUENCE [MRNA]</scope>
</reference>
<dbReference type="EMBL" id="AB178767">
    <property type="protein sequence ID" value="BAD90602.1"/>
    <property type="molecule type" value="mRNA"/>
</dbReference>
<dbReference type="RefSeq" id="NP_001012737.1">
    <property type="nucleotide sequence ID" value="NM_001012719.1"/>
</dbReference>
<dbReference type="RefSeq" id="XP_038523545.1">
    <property type="nucleotide sequence ID" value="XM_038667617.1"/>
</dbReference>
<dbReference type="RefSeq" id="XP_038523546.1">
    <property type="nucleotide sequence ID" value="XM_038667618.1"/>
</dbReference>
<dbReference type="SMR" id="Q5DWN0"/>
<dbReference type="FunCoup" id="Q5DWN0">
    <property type="interactions" value="62"/>
</dbReference>
<dbReference type="PaxDb" id="9612-ENSCAFP00000043191"/>
<dbReference type="Ensembl" id="ENSCAFT00000032093.3">
    <property type="protein sequence ID" value="ENSCAFP00000029887.2"/>
    <property type="gene ID" value="ENSCAFG00000020154.6"/>
</dbReference>
<dbReference type="Ensembl" id="ENSCAFT00030016956.1">
    <property type="protein sequence ID" value="ENSCAFP00030014818.1"/>
    <property type="gene ID" value="ENSCAFG00030009151.1"/>
</dbReference>
<dbReference type="Ensembl" id="ENSCAFT00040010001.1">
    <property type="protein sequence ID" value="ENSCAFP00040008672.1"/>
    <property type="gene ID" value="ENSCAFG00040005332.1"/>
</dbReference>
<dbReference type="Ensembl" id="ENSCAFT00845027512.1">
    <property type="protein sequence ID" value="ENSCAFP00845021646.1"/>
    <property type="gene ID" value="ENSCAFG00845015425.1"/>
</dbReference>
<dbReference type="GeneID" id="490156"/>
<dbReference type="KEGG" id="cfa:490156"/>
<dbReference type="CTD" id="2672"/>
<dbReference type="VEuPathDB" id="HostDB:ENSCAFG00845015425"/>
<dbReference type="eggNOG" id="KOG1721">
    <property type="taxonomic scope" value="Eukaryota"/>
</dbReference>
<dbReference type="GeneTree" id="ENSGT00940000156166"/>
<dbReference type="HOGENOM" id="CLU_002678_94_9_1"/>
<dbReference type="InParanoid" id="Q5DWN0"/>
<dbReference type="OMA" id="CDRVSEF"/>
<dbReference type="OrthoDB" id="6155966at2759"/>
<dbReference type="TreeFam" id="TF350784"/>
<dbReference type="Proteomes" id="UP000002254">
    <property type="component" value="Chromosome 6"/>
</dbReference>
<dbReference type="Proteomes" id="UP000694429">
    <property type="component" value="Chromosome 6"/>
</dbReference>
<dbReference type="Proteomes" id="UP000694542">
    <property type="component" value="Chromosome 6"/>
</dbReference>
<dbReference type="Proteomes" id="UP000805418">
    <property type="component" value="Chromosome 6"/>
</dbReference>
<dbReference type="Bgee" id="ENSCAFG00000020154">
    <property type="expression patterns" value="Expressed in thymus and 46 other cell types or tissues"/>
</dbReference>
<dbReference type="GO" id="GO:0016604">
    <property type="term" value="C:nuclear body"/>
    <property type="evidence" value="ECO:0007669"/>
    <property type="project" value="Ensembl"/>
</dbReference>
<dbReference type="GO" id="GO:0016363">
    <property type="term" value="C:nuclear matrix"/>
    <property type="evidence" value="ECO:0007669"/>
    <property type="project" value="Ensembl"/>
</dbReference>
<dbReference type="GO" id="GO:0017053">
    <property type="term" value="C:transcription repressor complex"/>
    <property type="evidence" value="ECO:0000250"/>
    <property type="project" value="UniProtKB"/>
</dbReference>
<dbReference type="GO" id="GO:0003700">
    <property type="term" value="F:DNA-binding transcription factor activity"/>
    <property type="evidence" value="ECO:0000318"/>
    <property type="project" value="GO_Central"/>
</dbReference>
<dbReference type="GO" id="GO:0001227">
    <property type="term" value="F:DNA-binding transcription repressor activity, RNA polymerase II-specific"/>
    <property type="evidence" value="ECO:0007669"/>
    <property type="project" value="Ensembl"/>
</dbReference>
<dbReference type="GO" id="GO:0140767">
    <property type="term" value="F:enzyme-substrate adaptor activity"/>
    <property type="evidence" value="ECO:0000250"/>
    <property type="project" value="UniProtKB"/>
</dbReference>
<dbReference type="GO" id="GO:0000978">
    <property type="term" value="F:RNA polymerase II cis-regulatory region sequence-specific DNA binding"/>
    <property type="evidence" value="ECO:0000318"/>
    <property type="project" value="GO_Central"/>
</dbReference>
<dbReference type="GO" id="GO:0008270">
    <property type="term" value="F:zinc ion binding"/>
    <property type="evidence" value="ECO:0007669"/>
    <property type="project" value="UniProtKB-KW"/>
</dbReference>
<dbReference type="GO" id="GO:0071222">
    <property type="term" value="P:cellular response to lipopolysaccharide"/>
    <property type="evidence" value="ECO:0007669"/>
    <property type="project" value="Ensembl"/>
</dbReference>
<dbReference type="GO" id="GO:0006974">
    <property type="term" value="P:DNA damage response"/>
    <property type="evidence" value="ECO:0000250"/>
    <property type="project" value="UniProtKB"/>
</dbReference>
<dbReference type="GO" id="GO:0010977">
    <property type="term" value="P:negative regulation of neuron projection development"/>
    <property type="evidence" value="ECO:0000250"/>
    <property type="project" value="UniProtKB"/>
</dbReference>
<dbReference type="GO" id="GO:0010957">
    <property type="term" value="P:negative regulation of vitamin D biosynthetic process"/>
    <property type="evidence" value="ECO:0007669"/>
    <property type="project" value="Ensembl"/>
</dbReference>
<dbReference type="GO" id="GO:0070105">
    <property type="term" value="P:positive regulation of interleukin-6-mediated signaling pathway"/>
    <property type="evidence" value="ECO:0007669"/>
    <property type="project" value="Ensembl"/>
</dbReference>
<dbReference type="GO" id="GO:0034121">
    <property type="term" value="P:regulation of toll-like receptor signaling pathway"/>
    <property type="evidence" value="ECO:0007669"/>
    <property type="project" value="Ensembl"/>
</dbReference>
<dbReference type="GO" id="GO:0006357">
    <property type="term" value="P:regulation of transcription by RNA polymerase II"/>
    <property type="evidence" value="ECO:0000318"/>
    <property type="project" value="GO_Central"/>
</dbReference>
<dbReference type="FunFam" id="3.30.160.60:FF:000489">
    <property type="entry name" value="Zinc finger protein Gfi-1"/>
    <property type="match status" value="1"/>
</dbReference>
<dbReference type="FunFam" id="3.30.160.60:FF:000827">
    <property type="entry name" value="Zinc finger protein Gfi-1"/>
    <property type="match status" value="1"/>
</dbReference>
<dbReference type="FunFam" id="3.30.160.60:FF:000148">
    <property type="entry name" value="zinc finger protein Gfi-1"/>
    <property type="match status" value="1"/>
</dbReference>
<dbReference type="FunFam" id="3.30.160.60:FF:000245">
    <property type="entry name" value="zinc finger protein Gfi-1"/>
    <property type="match status" value="1"/>
</dbReference>
<dbReference type="FunFam" id="3.30.160.60:FF:000208">
    <property type="entry name" value="zinc finger protein Gfi-1b"/>
    <property type="match status" value="1"/>
</dbReference>
<dbReference type="FunFam" id="3.30.160.60:FF:000432">
    <property type="entry name" value="zinc finger protein Gfi-1b isoform X1"/>
    <property type="match status" value="1"/>
</dbReference>
<dbReference type="Gene3D" id="3.30.160.60">
    <property type="entry name" value="Classic Zinc Finger"/>
    <property type="match status" value="6"/>
</dbReference>
<dbReference type="InterPro" id="IPR036236">
    <property type="entry name" value="Znf_C2H2_sf"/>
</dbReference>
<dbReference type="InterPro" id="IPR013087">
    <property type="entry name" value="Znf_C2H2_type"/>
</dbReference>
<dbReference type="PANTHER" id="PTHR23226:SF419">
    <property type="entry name" value="FI21258P1-RELATED"/>
    <property type="match status" value="1"/>
</dbReference>
<dbReference type="PANTHER" id="PTHR23226">
    <property type="entry name" value="ZINC FINGER AND SCAN DOMAIN-CONTAINING"/>
    <property type="match status" value="1"/>
</dbReference>
<dbReference type="Pfam" id="PF00096">
    <property type="entry name" value="zf-C2H2"/>
    <property type="match status" value="6"/>
</dbReference>
<dbReference type="SMART" id="SM00355">
    <property type="entry name" value="ZnF_C2H2"/>
    <property type="match status" value="6"/>
</dbReference>
<dbReference type="SUPFAM" id="SSF57667">
    <property type="entry name" value="beta-beta-alpha zinc fingers"/>
    <property type="match status" value="3"/>
</dbReference>
<dbReference type="PROSITE" id="PS00028">
    <property type="entry name" value="ZINC_FINGER_C2H2_1"/>
    <property type="match status" value="6"/>
</dbReference>
<dbReference type="PROSITE" id="PS50157">
    <property type="entry name" value="ZINC_FINGER_C2H2_2"/>
    <property type="match status" value="6"/>
</dbReference>
<proteinExistence type="evidence at transcript level"/>